<reference key="1">
    <citation type="journal article" date="2008" name="J. Bacteriol.">
        <title>Insights into plant cell wall degradation from the genome sequence of the soil bacterium Cellvibrio japonicus.</title>
        <authorList>
            <person name="DeBoy R.T."/>
            <person name="Mongodin E.F."/>
            <person name="Fouts D.E."/>
            <person name="Tailford L.E."/>
            <person name="Khouri H."/>
            <person name="Emerson J.B."/>
            <person name="Mohamoud Y."/>
            <person name="Watkins K."/>
            <person name="Henrissat B."/>
            <person name="Gilbert H.J."/>
            <person name="Nelson K.E."/>
        </authorList>
    </citation>
    <scope>NUCLEOTIDE SEQUENCE [LARGE SCALE GENOMIC DNA]</scope>
    <source>
        <strain>Ueda107</strain>
    </source>
</reference>
<sequence length="235" mass="27280">MIPWLSPYSLEFPDVRLALDEPNGLLALGGDLSPERLVSAYQRGIFPWFNPGDPILWWSPHPRTVVFPHQHHVSRSLRKTLRKGIYRVTFDHCFAQVMRACAAPRAYANGTWISEQMISSYTRLHEQGYAHSVEVWQDENLVGGLYGLSLGKIFFGESMFSRADNASKTGFAYLVRQLQQWDFRLIDCQVASDHLFTLGAVEISRDEFQKMLVHFTEQPRDYPLHWHEIDPETRW</sequence>
<evidence type="ECO:0000255" key="1">
    <source>
        <dbReference type="HAMAP-Rule" id="MF_00688"/>
    </source>
</evidence>
<gene>
    <name evidence="1" type="primary">aat</name>
    <name type="ordered locus">CJA_2565</name>
</gene>
<feature type="chain" id="PRO_1000131912" description="Leucyl/phenylalanyl-tRNA--protein transferase">
    <location>
        <begin position="1"/>
        <end position="235"/>
    </location>
</feature>
<proteinExistence type="inferred from homology"/>
<keyword id="KW-0012">Acyltransferase</keyword>
<keyword id="KW-0963">Cytoplasm</keyword>
<keyword id="KW-1185">Reference proteome</keyword>
<keyword id="KW-0808">Transferase</keyword>
<dbReference type="EC" id="2.3.2.6" evidence="1"/>
<dbReference type="EMBL" id="CP000934">
    <property type="protein sequence ID" value="ACE85025.1"/>
    <property type="molecule type" value="Genomic_DNA"/>
</dbReference>
<dbReference type="RefSeq" id="WP_012488161.1">
    <property type="nucleotide sequence ID" value="NC_010995.1"/>
</dbReference>
<dbReference type="SMR" id="B3PL51"/>
<dbReference type="STRING" id="498211.CJA_2565"/>
<dbReference type="KEGG" id="cja:CJA_2565"/>
<dbReference type="eggNOG" id="COG2360">
    <property type="taxonomic scope" value="Bacteria"/>
</dbReference>
<dbReference type="HOGENOM" id="CLU_075045_0_0_6"/>
<dbReference type="OrthoDB" id="9790282at2"/>
<dbReference type="Proteomes" id="UP000001036">
    <property type="component" value="Chromosome"/>
</dbReference>
<dbReference type="GO" id="GO:0005737">
    <property type="term" value="C:cytoplasm"/>
    <property type="evidence" value="ECO:0007669"/>
    <property type="project" value="UniProtKB-SubCell"/>
</dbReference>
<dbReference type="GO" id="GO:0008914">
    <property type="term" value="F:leucyl-tRNA--protein transferase activity"/>
    <property type="evidence" value="ECO:0007669"/>
    <property type="project" value="UniProtKB-UniRule"/>
</dbReference>
<dbReference type="GO" id="GO:0030163">
    <property type="term" value="P:protein catabolic process"/>
    <property type="evidence" value="ECO:0007669"/>
    <property type="project" value="UniProtKB-UniRule"/>
</dbReference>
<dbReference type="FunFam" id="3.30.70.3550:FF:000001">
    <property type="entry name" value="Leucyl/phenylalanyl-tRNA--protein transferase"/>
    <property type="match status" value="1"/>
</dbReference>
<dbReference type="FunFam" id="3.40.630.70:FF:000001">
    <property type="entry name" value="Leucyl/phenylalanyl-tRNA--protein transferase"/>
    <property type="match status" value="1"/>
</dbReference>
<dbReference type="Gene3D" id="3.40.630.70">
    <property type="entry name" value="Leucyl/phenylalanyl-tRNA-protein transferase, C-terminal domain"/>
    <property type="match status" value="1"/>
</dbReference>
<dbReference type="Gene3D" id="3.30.70.3550">
    <property type="entry name" value="Leucyl/phenylalanyl-tRNA-protein transferase, N-terminal domain"/>
    <property type="match status" value="1"/>
</dbReference>
<dbReference type="HAMAP" id="MF_00688">
    <property type="entry name" value="Leu_Phe_trans"/>
    <property type="match status" value="1"/>
</dbReference>
<dbReference type="InterPro" id="IPR016181">
    <property type="entry name" value="Acyl_CoA_acyltransferase"/>
</dbReference>
<dbReference type="InterPro" id="IPR004616">
    <property type="entry name" value="Leu/Phe-tRNA_Trfase"/>
</dbReference>
<dbReference type="InterPro" id="IPR042203">
    <property type="entry name" value="Leu/Phe-tRNA_Trfase_C"/>
</dbReference>
<dbReference type="InterPro" id="IPR042221">
    <property type="entry name" value="Leu/Phe-tRNA_Trfase_N"/>
</dbReference>
<dbReference type="NCBIfam" id="TIGR00667">
    <property type="entry name" value="aat"/>
    <property type="match status" value="1"/>
</dbReference>
<dbReference type="PANTHER" id="PTHR30098">
    <property type="entry name" value="LEUCYL/PHENYLALANYL-TRNA--PROTEIN TRANSFERASE"/>
    <property type="match status" value="1"/>
</dbReference>
<dbReference type="PANTHER" id="PTHR30098:SF2">
    <property type="entry name" value="LEUCYL_PHENYLALANYL-TRNA--PROTEIN TRANSFERASE"/>
    <property type="match status" value="1"/>
</dbReference>
<dbReference type="Pfam" id="PF03588">
    <property type="entry name" value="Leu_Phe_trans"/>
    <property type="match status" value="1"/>
</dbReference>
<dbReference type="SUPFAM" id="SSF55729">
    <property type="entry name" value="Acyl-CoA N-acyltransferases (Nat)"/>
    <property type="match status" value="1"/>
</dbReference>
<comment type="function">
    <text evidence="1">Functions in the N-end rule pathway of protein degradation where it conjugates Leu, Phe and, less efficiently, Met from aminoacyl-tRNAs to the N-termini of proteins containing an N-terminal arginine or lysine.</text>
</comment>
<comment type="catalytic activity">
    <reaction evidence="1">
        <text>N-terminal L-lysyl-[protein] + L-leucyl-tRNA(Leu) = N-terminal L-leucyl-L-lysyl-[protein] + tRNA(Leu) + H(+)</text>
        <dbReference type="Rhea" id="RHEA:12340"/>
        <dbReference type="Rhea" id="RHEA-COMP:9613"/>
        <dbReference type="Rhea" id="RHEA-COMP:9622"/>
        <dbReference type="Rhea" id="RHEA-COMP:12670"/>
        <dbReference type="Rhea" id="RHEA-COMP:12671"/>
        <dbReference type="ChEBI" id="CHEBI:15378"/>
        <dbReference type="ChEBI" id="CHEBI:65249"/>
        <dbReference type="ChEBI" id="CHEBI:78442"/>
        <dbReference type="ChEBI" id="CHEBI:78494"/>
        <dbReference type="ChEBI" id="CHEBI:133043"/>
        <dbReference type="EC" id="2.3.2.6"/>
    </reaction>
</comment>
<comment type="catalytic activity">
    <reaction evidence="1">
        <text>N-terminal L-arginyl-[protein] + L-leucyl-tRNA(Leu) = N-terminal L-leucyl-L-arginyl-[protein] + tRNA(Leu) + H(+)</text>
        <dbReference type="Rhea" id="RHEA:50416"/>
        <dbReference type="Rhea" id="RHEA-COMP:9613"/>
        <dbReference type="Rhea" id="RHEA-COMP:9622"/>
        <dbReference type="Rhea" id="RHEA-COMP:12672"/>
        <dbReference type="Rhea" id="RHEA-COMP:12673"/>
        <dbReference type="ChEBI" id="CHEBI:15378"/>
        <dbReference type="ChEBI" id="CHEBI:64719"/>
        <dbReference type="ChEBI" id="CHEBI:78442"/>
        <dbReference type="ChEBI" id="CHEBI:78494"/>
        <dbReference type="ChEBI" id="CHEBI:133044"/>
        <dbReference type="EC" id="2.3.2.6"/>
    </reaction>
</comment>
<comment type="catalytic activity">
    <reaction evidence="1">
        <text>L-phenylalanyl-tRNA(Phe) + an N-terminal L-alpha-aminoacyl-[protein] = an N-terminal L-phenylalanyl-L-alpha-aminoacyl-[protein] + tRNA(Phe)</text>
        <dbReference type="Rhea" id="RHEA:43632"/>
        <dbReference type="Rhea" id="RHEA-COMP:9668"/>
        <dbReference type="Rhea" id="RHEA-COMP:9699"/>
        <dbReference type="Rhea" id="RHEA-COMP:10636"/>
        <dbReference type="Rhea" id="RHEA-COMP:10637"/>
        <dbReference type="ChEBI" id="CHEBI:78442"/>
        <dbReference type="ChEBI" id="CHEBI:78531"/>
        <dbReference type="ChEBI" id="CHEBI:78597"/>
        <dbReference type="ChEBI" id="CHEBI:83561"/>
        <dbReference type="EC" id="2.3.2.6"/>
    </reaction>
</comment>
<comment type="subcellular location">
    <subcellularLocation>
        <location evidence="1">Cytoplasm</location>
    </subcellularLocation>
</comment>
<comment type="similarity">
    <text evidence="1">Belongs to the L/F-transferase family.</text>
</comment>
<accession>B3PL51</accession>
<organism>
    <name type="scientific">Cellvibrio japonicus (strain Ueda107)</name>
    <name type="common">Pseudomonas fluorescens subsp. cellulosa</name>
    <dbReference type="NCBI Taxonomy" id="498211"/>
    <lineage>
        <taxon>Bacteria</taxon>
        <taxon>Pseudomonadati</taxon>
        <taxon>Pseudomonadota</taxon>
        <taxon>Gammaproteobacteria</taxon>
        <taxon>Cellvibrionales</taxon>
        <taxon>Cellvibrionaceae</taxon>
        <taxon>Cellvibrio</taxon>
    </lineage>
</organism>
<protein>
    <recommendedName>
        <fullName evidence="1">Leucyl/phenylalanyl-tRNA--protein transferase</fullName>
        <ecNumber evidence="1">2.3.2.6</ecNumber>
    </recommendedName>
    <alternativeName>
        <fullName evidence="1">L/F-transferase</fullName>
    </alternativeName>
    <alternativeName>
        <fullName evidence="1">Leucyltransferase</fullName>
    </alternativeName>
    <alternativeName>
        <fullName evidence="1">Phenyalanyltransferase</fullName>
    </alternativeName>
</protein>
<name>LFTR_CELJU</name>